<organism>
    <name type="scientific">Campylobacter lari (strain RM2100 / D67 / ATCC BAA-1060)</name>
    <dbReference type="NCBI Taxonomy" id="306263"/>
    <lineage>
        <taxon>Bacteria</taxon>
        <taxon>Pseudomonadati</taxon>
        <taxon>Campylobacterota</taxon>
        <taxon>Epsilonproteobacteria</taxon>
        <taxon>Campylobacterales</taxon>
        <taxon>Campylobacteraceae</taxon>
        <taxon>Campylobacter</taxon>
    </lineage>
</organism>
<protein>
    <recommendedName>
        <fullName evidence="1">Large ribosomal subunit protein uL11</fullName>
    </recommendedName>
    <alternativeName>
        <fullName evidence="2">50S ribosomal protein L11</fullName>
    </alternativeName>
</protein>
<name>RL11_CAMLR</name>
<keyword id="KW-0488">Methylation</keyword>
<keyword id="KW-1185">Reference proteome</keyword>
<keyword id="KW-0687">Ribonucleoprotein</keyword>
<keyword id="KW-0689">Ribosomal protein</keyword>
<keyword id="KW-0694">RNA-binding</keyword>
<keyword id="KW-0699">rRNA-binding</keyword>
<reference key="1">
    <citation type="journal article" date="2008" name="Foodborne Pathog. Dis.">
        <title>The complete genome sequence and analysis of the human pathogen Campylobacter lari.</title>
        <authorList>
            <person name="Miller W.G."/>
            <person name="Wang G."/>
            <person name="Binnewies T.T."/>
            <person name="Parker C.T."/>
        </authorList>
    </citation>
    <scope>NUCLEOTIDE SEQUENCE [LARGE SCALE GENOMIC DNA]</scope>
    <source>
        <strain>RM2100 / D67 / ATCC BAA-1060</strain>
    </source>
</reference>
<comment type="function">
    <text evidence="1">Forms part of the ribosomal stalk which helps the ribosome interact with GTP-bound translation factors.</text>
</comment>
<comment type="subunit">
    <text evidence="1">Part of the ribosomal stalk of the 50S ribosomal subunit. Interacts with L10 and the large rRNA to form the base of the stalk. L10 forms an elongated spine to which L12 dimers bind in a sequential fashion forming a multimeric L10(L12)X complex.</text>
</comment>
<comment type="PTM">
    <text evidence="1">One or more lysine residues are methylated.</text>
</comment>
<comment type="similarity">
    <text evidence="1">Belongs to the universal ribosomal protein uL11 family.</text>
</comment>
<sequence length="141" mass="15114">MAKKVVGEIKLQIAATKANPSPPVGPALGQQGVNIMEFCKAFNERTKDMAGFNIPVVITVYADKSFTFITKQPPATDLIKKAAGISKGADNPLKNKVGKLTKAQVLEIVDKKIADMNTKDREQAAKIIMGSARSMGVEIVD</sequence>
<dbReference type="EMBL" id="CP000932">
    <property type="protein sequence ID" value="ACM63798.1"/>
    <property type="molecule type" value="Genomic_DNA"/>
</dbReference>
<dbReference type="RefSeq" id="WP_012661181.1">
    <property type="nucleotide sequence ID" value="NC_012039.1"/>
</dbReference>
<dbReference type="SMR" id="B9KFG3"/>
<dbReference type="STRING" id="306263.Cla_0445"/>
<dbReference type="GeneID" id="93004533"/>
<dbReference type="KEGG" id="cla:CLA_0445"/>
<dbReference type="eggNOG" id="COG0080">
    <property type="taxonomic scope" value="Bacteria"/>
</dbReference>
<dbReference type="HOGENOM" id="CLU_074237_2_0_7"/>
<dbReference type="Proteomes" id="UP000007727">
    <property type="component" value="Chromosome"/>
</dbReference>
<dbReference type="GO" id="GO:0022625">
    <property type="term" value="C:cytosolic large ribosomal subunit"/>
    <property type="evidence" value="ECO:0007669"/>
    <property type="project" value="TreeGrafter"/>
</dbReference>
<dbReference type="GO" id="GO:0070180">
    <property type="term" value="F:large ribosomal subunit rRNA binding"/>
    <property type="evidence" value="ECO:0007669"/>
    <property type="project" value="UniProtKB-UniRule"/>
</dbReference>
<dbReference type="GO" id="GO:0003735">
    <property type="term" value="F:structural constituent of ribosome"/>
    <property type="evidence" value="ECO:0007669"/>
    <property type="project" value="InterPro"/>
</dbReference>
<dbReference type="GO" id="GO:0006412">
    <property type="term" value="P:translation"/>
    <property type="evidence" value="ECO:0007669"/>
    <property type="project" value="UniProtKB-UniRule"/>
</dbReference>
<dbReference type="CDD" id="cd00349">
    <property type="entry name" value="Ribosomal_L11"/>
    <property type="match status" value="1"/>
</dbReference>
<dbReference type="FunFam" id="1.10.10.250:FF:000001">
    <property type="entry name" value="50S ribosomal protein L11"/>
    <property type="match status" value="1"/>
</dbReference>
<dbReference type="FunFam" id="3.30.1550.10:FF:000001">
    <property type="entry name" value="50S ribosomal protein L11"/>
    <property type="match status" value="1"/>
</dbReference>
<dbReference type="Gene3D" id="1.10.10.250">
    <property type="entry name" value="Ribosomal protein L11, C-terminal domain"/>
    <property type="match status" value="1"/>
</dbReference>
<dbReference type="Gene3D" id="3.30.1550.10">
    <property type="entry name" value="Ribosomal protein L11/L12, N-terminal domain"/>
    <property type="match status" value="1"/>
</dbReference>
<dbReference type="HAMAP" id="MF_00736">
    <property type="entry name" value="Ribosomal_uL11"/>
    <property type="match status" value="1"/>
</dbReference>
<dbReference type="InterPro" id="IPR000911">
    <property type="entry name" value="Ribosomal_uL11"/>
</dbReference>
<dbReference type="InterPro" id="IPR006519">
    <property type="entry name" value="Ribosomal_uL11_bac-typ"/>
</dbReference>
<dbReference type="InterPro" id="IPR020783">
    <property type="entry name" value="Ribosomal_uL11_C"/>
</dbReference>
<dbReference type="InterPro" id="IPR036769">
    <property type="entry name" value="Ribosomal_uL11_C_sf"/>
</dbReference>
<dbReference type="InterPro" id="IPR020785">
    <property type="entry name" value="Ribosomal_uL11_CS"/>
</dbReference>
<dbReference type="InterPro" id="IPR020784">
    <property type="entry name" value="Ribosomal_uL11_N"/>
</dbReference>
<dbReference type="InterPro" id="IPR036796">
    <property type="entry name" value="Ribosomal_uL11_N_sf"/>
</dbReference>
<dbReference type="NCBIfam" id="TIGR01632">
    <property type="entry name" value="L11_bact"/>
    <property type="match status" value="1"/>
</dbReference>
<dbReference type="PANTHER" id="PTHR11661">
    <property type="entry name" value="60S RIBOSOMAL PROTEIN L12"/>
    <property type="match status" value="1"/>
</dbReference>
<dbReference type="PANTHER" id="PTHR11661:SF1">
    <property type="entry name" value="LARGE RIBOSOMAL SUBUNIT PROTEIN UL11M"/>
    <property type="match status" value="1"/>
</dbReference>
<dbReference type="Pfam" id="PF00298">
    <property type="entry name" value="Ribosomal_L11"/>
    <property type="match status" value="1"/>
</dbReference>
<dbReference type="Pfam" id="PF03946">
    <property type="entry name" value="Ribosomal_L11_N"/>
    <property type="match status" value="1"/>
</dbReference>
<dbReference type="SMART" id="SM00649">
    <property type="entry name" value="RL11"/>
    <property type="match status" value="1"/>
</dbReference>
<dbReference type="SUPFAM" id="SSF54747">
    <property type="entry name" value="Ribosomal L11/L12e N-terminal domain"/>
    <property type="match status" value="1"/>
</dbReference>
<dbReference type="SUPFAM" id="SSF46906">
    <property type="entry name" value="Ribosomal protein L11, C-terminal domain"/>
    <property type="match status" value="1"/>
</dbReference>
<dbReference type="PROSITE" id="PS00359">
    <property type="entry name" value="RIBOSOMAL_L11"/>
    <property type="match status" value="1"/>
</dbReference>
<proteinExistence type="inferred from homology"/>
<accession>B9KFG3</accession>
<evidence type="ECO:0000255" key="1">
    <source>
        <dbReference type="HAMAP-Rule" id="MF_00736"/>
    </source>
</evidence>
<evidence type="ECO:0000305" key="2"/>
<gene>
    <name evidence="1" type="primary">rplK</name>
    <name type="ordered locus">Cla_0445</name>
</gene>
<feature type="chain" id="PRO_1000195590" description="Large ribosomal subunit protein uL11">
    <location>
        <begin position="1"/>
        <end position="141"/>
    </location>
</feature>